<feature type="chain" id="PRO_0000461424" description="Ubiquitin carboxyl-terminal hydrolase 12">
    <location>
        <begin position="1"/>
        <end position="370"/>
    </location>
</feature>
<feature type="domain" description="USP" evidence="3">
    <location>
        <begin position="39"/>
        <end position="369"/>
    </location>
</feature>
<feature type="region of interest" description="Disordered" evidence="4">
    <location>
        <begin position="146"/>
        <end position="168"/>
    </location>
</feature>
<feature type="short sequence motif" description="Required for plasma membrane localization of USP12/WDR20" evidence="1">
    <location>
        <begin position="1"/>
        <end position="4"/>
    </location>
</feature>
<feature type="compositionally biased region" description="Basic and acidic residues" evidence="4">
    <location>
        <begin position="146"/>
        <end position="157"/>
    </location>
</feature>
<feature type="active site" description="Nucleophile" evidence="3">
    <location>
        <position position="48"/>
    </location>
</feature>
<feature type="active site" description="Proton acceptor" evidence="3">
    <location>
        <position position="317"/>
    </location>
</feature>
<feature type="binding site" evidence="1">
    <location>
        <position position="186"/>
    </location>
    <ligand>
        <name>Zn(2+)</name>
        <dbReference type="ChEBI" id="CHEBI:29105"/>
    </ligand>
</feature>
<feature type="binding site" evidence="1">
    <location>
        <position position="189"/>
    </location>
    <ligand>
        <name>Zn(2+)</name>
        <dbReference type="ChEBI" id="CHEBI:29105"/>
    </ligand>
</feature>
<feature type="binding site" evidence="1">
    <location>
        <position position="233"/>
    </location>
    <ligand>
        <name>Zn(2+)</name>
        <dbReference type="ChEBI" id="CHEBI:29105"/>
    </ligand>
</feature>
<feature type="binding site" evidence="1">
    <location>
        <position position="236"/>
    </location>
    <ligand>
        <name>Zn(2+)</name>
        <dbReference type="ChEBI" id="CHEBI:29105"/>
    </ligand>
</feature>
<feature type="mutagenesis site" description="Abolishes catalytic activity. Retains the ability to protect against HTT/huntingtin-induced polyglutamine expansion-dependent toxicity; on its own or in association with S-50." evidence="5">
    <original>C</original>
    <variation>S</variation>
    <location>
        <position position="48"/>
    </location>
</feature>
<feature type="mutagenesis site" description="Retains the ability to protect against HTT/huntingtin-induced polyglutamine expansion-dependent toxicity; on its own or in association with S-48." evidence="5">
    <original>C</original>
    <variation>S</variation>
    <location>
        <position position="50"/>
    </location>
</feature>
<sequence>MEILMTVSKFASICTMGANASALEKEIGPEQFPVNEHYFGLVNFGNTCYCNSVLQALYFCRPFRDKVLAYKSQPRKKESLLTCLADLFHSIATQKKKVGVIPPKKFITRLRKENELFDNYMQQDAHEFLNYLLNTIADILQEERKQEKQNGRLRNGDVDSEDNNSTPDPTWVHEIFQGTLTNETRCLTCETISSKDEDFLDLSVDVEQNTSITHCLRGFSNTETLCSEYKYYCEECRSKQEAHKRMKVKKLPMILALHLKRFKYMDQLHRYTKLSYRVVFPLELRLFNTSGDATNPDRMYDLVAVVVHCGSGPNRGHYIAIVKSHDFWLLFDDDIVEKIDAQAIEEFYGLTSDISKNSESGYILFYQSRD</sequence>
<gene>
    <name evidence="9" type="primary">Usp12</name>
</gene>
<dbReference type="EC" id="3.4.19.12" evidence="1"/>
<dbReference type="EMBL" id="FN557299">
    <property type="protein sequence ID" value="CBH26010.1"/>
    <property type="molecule type" value="mRNA"/>
</dbReference>
<dbReference type="RefSeq" id="NP_001160048.1">
    <property type="nucleotide sequence ID" value="NM_001166576.2"/>
</dbReference>
<dbReference type="SMR" id="D0RB01"/>
<dbReference type="FunCoup" id="D0RB01">
    <property type="interactions" value="894"/>
</dbReference>
<dbReference type="PhosphoSitePlus" id="D0RB01"/>
<dbReference type="PeptideAtlas" id="D0RB01"/>
<dbReference type="Ensembl" id="ENSRNOT00000114389.1">
    <property type="protein sequence ID" value="ENSRNOP00000080030.1"/>
    <property type="gene ID" value="ENSRNOG00000033411.6"/>
</dbReference>
<dbReference type="Ensembl" id="ENSRNOT00055006182">
    <property type="protein sequence ID" value="ENSRNOP00055004703"/>
    <property type="gene ID" value="ENSRNOG00055003882"/>
</dbReference>
<dbReference type="Ensembl" id="ENSRNOT00060003168">
    <property type="protein sequence ID" value="ENSRNOP00060002152"/>
    <property type="gene ID" value="ENSRNOG00060001968"/>
</dbReference>
<dbReference type="Ensembl" id="ENSRNOT00065010213">
    <property type="protein sequence ID" value="ENSRNOP00065007454"/>
    <property type="gene ID" value="ENSRNOG00065006511"/>
</dbReference>
<dbReference type="GeneID" id="360763"/>
<dbReference type="KEGG" id="rno:360763"/>
<dbReference type="AGR" id="RGD:1308045"/>
<dbReference type="CTD" id="219333"/>
<dbReference type="RGD" id="1308045">
    <property type="gene designation" value="Usp12"/>
</dbReference>
<dbReference type="GeneTree" id="ENSGT00940000153284"/>
<dbReference type="HOGENOM" id="CLU_008279_2_0_1"/>
<dbReference type="OMA" id="KSHNFWL"/>
<dbReference type="OrthoDB" id="27652at2759"/>
<dbReference type="PhylomeDB" id="D0RB01"/>
<dbReference type="Reactome" id="R-RNO-5689880">
    <property type="pathway name" value="Ub-specific processing proteases"/>
</dbReference>
<dbReference type="Proteomes" id="UP000002494">
    <property type="component" value="Chromosome 12"/>
</dbReference>
<dbReference type="GO" id="GO:0005737">
    <property type="term" value="C:cytoplasm"/>
    <property type="evidence" value="ECO:0000266"/>
    <property type="project" value="RGD"/>
</dbReference>
<dbReference type="GO" id="GO:0005829">
    <property type="term" value="C:cytosol"/>
    <property type="evidence" value="ECO:0000318"/>
    <property type="project" value="GO_Central"/>
</dbReference>
<dbReference type="GO" id="GO:0005634">
    <property type="term" value="C:nucleus"/>
    <property type="evidence" value="ECO:0000266"/>
    <property type="project" value="RGD"/>
</dbReference>
<dbReference type="GO" id="GO:0005886">
    <property type="term" value="C:plasma membrane"/>
    <property type="evidence" value="ECO:0000266"/>
    <property type="project" value="RGD"/>
</dbReference>
<dbReference type="GO" id="GO:0004843">
    <property type="term" value="F:cysteine-type deubiquitinase activity"/>
    <property type="evidence" value="ECO:0000266"/>
    <property type="project" value="RGD"/>
</dbReference>
<dbReference type="GO" id="GO:0004197">
    <property type="term" value="F:cysteine-type endopeptidase activity"/>
    <property type="evidence" value="ECO:0000266"/>
    <property type="project" value="RGD"/>
</dbReference>
<dbReference type="GO" id="GO:0101005">
    <property type="term" value="F:deubiquitinase activity"/>
    <property type="evidence" value="ECO:0000266"/>
    <property type="project" value="RGD"/>
</dbReference>
<dbReference type="GO" id="GO:0046872">
    <property type="term" value="F:metal ion binding"/>
    <property type="evidence" value="ECO:0007669"/>
    <property type="project" value="UniProtKB-KW"/>
</dbReference>
<dbReference type="GO" id="GO:0016579">
    <property type="term" value="P:protein deubiquitination"/>
    <property type="evidence" value="ECO:0000266"/>
    <property type="project" value="RGD"/>
</dbReference>
<dbReference type="GO" id="GO:0006508">
    <property type="term" value="P:proteolysis"/>
    <property type="evidence" value="ECO:0007669"/>
    <property type="project" value="UniProtKB-KW"/>
</dbReference>
<dbReference type="GO" id="GO:0031647">
    <property type="term" value="P:regulation of protein stability"/>
    <property type="evidence" value="ECO:0000318"/>
    <property type="project" value="GO_Central"/>
</dbReference>
<dbReference type="CDD" id="cd02663">
    <property type="entry name" value="Peptidase_C19G"/>
    <property type="match status" value="1"/>
</dbReference>
<dbReference type="FunFam" id="3.90.70.10:FF:000003">
    <property type="entry name" value="Ubiquitin carboxyl-terminal hydrolase 46"/>
    <property type="match status" value="1"/>
</dbReference>
<dbReference type="Gene3D" id="3.90.70.10">
    <property type="entry name" value="Cysteine proteinases"/>
    <property type="match status" value="1"/>
</dbReference>
<dbReference type="InterPro" id="IPR038765">
    <property type="entry name" value="Papain-like_cys_pep_sf"/>
</dbReference>
<dbReference type="InterPro" id="IPR050164">
    <property type="entry name" value="Peptidase_C19"/>
</dbReference>
<dbReference type="InterPro" id="IPR001394">
    <property type="entry name" value="Peptidase_C19_UCH"/>
</dbReference>
<dbReference type="InterPro" id="IPR018200">
    <property type="entry name" value="USP_CS"/>
</dbReference>
<dbReference type="InterPro" id="IPR028889">
    <property type="entry name" value="USP_dom"/>
</dbReference>
<dbReference type="PANTHER" id="PTHR24006">
    <property type="entry name" value="UBIQUITIN CARBOXYL-TERMINAL HYDROLASE"/>
    <property type="match status" value="1"/>
</dbReference>
<dbReference type="PANTHER" id="PTHR24006:SF647">
    <property type="entry name" value="UBIQUITIN CARBOXYL-TERMINAL HYDROLASE 12"/>
    <property type="match status" value="1"/>
</dbReference>
<dbReference type="Pfam" id="PF00443">
    <property type="entry name" value="UCH"/>
    <property type="match status" value="1"/>
</dbReference>
<dbReference type="SUPFAM" id="SSF54001">
    <property type="entry name" value="Cysteine proteinases"/>
    <property type="match status" value="1"/>
</dbReference>
<dbReference type="PROSITE" id="PS00972">
    <property type="entry name" value="USP_1"/>
    <property type="match status" value="1"/>
</dbReference>
<dbReference type="PROSITE" id="PS00973">
    <property type="entry name" value="USP_2"/>
    <property type="match status" value="1"/>
</dbReference>
<dbReference type="PROSITE" id="PS50235">
    <property type="entry name" value="USP_3"/>
    <property type="match status" value="1"/>
</dbReference>
<proteinExistence type="evidence at protein level"/>
<keyword id="KW-1003">Cell membrane</keyword>
<keyword id="KW-0963">Cytoplasm</keyword>
<keyword id="KW-0378">Hydrolase</keyword>
<keyword id="KW-0472">Membrane</keyword>
<keyword id="KW-0479">Metal-binding</keyword>
<keyword id="KW-0539">Nucleus</keyword>
<keyword id="KW-0645">Protease</keyword>
<keyword id="KW-1185">Reference proteome</keyword>
<keyword id="KW-0788">Thiol protease</keyword>
<keyword id="KW-0833">Ubl conjugation pathway</keyword>
<keyword id="KW-0862">Zinc</keyword>
<reference evidence="7" key="1">
    <citation type="submission" date="2009-10" db="EMBL/GenBank/DDBJ databases">
        <title>Molecular cloning of rat USP12.</title>
        <authorList>
            <person name="Tian Q.B."/>
            <person name="Liu Y.L."/>
            <person name="Zhang W."/>
            <person name="Li Q.K."/>
            <person name="Wang J.M."/>
        </authorList>
    </citation>
    <scope>NUCLEOTIDE SEQUENCE [MRNA]</scope>
    <source>
        <strain evidence="7">Wistar</strain>
        <tissue evidence="7">Brain</tissue>
    </source>
</reference>
<reference evidence="7" key="2">
    <citation type="submission" date="2009-10" db="EMBL/GenBank/DDBJ databases">
        <authorList>
            <person name="Li Q."/>
        </authorList>
    </citation>
    <scope>NUCLEOTIDE SEQUENCE [MRNA]</scope>
    <source>
        <strain evidence="7">Wistar</strain>
        <tissue evidence="7">Brain</tissue>
    </source>
</reference>
<reference evidence="8" key="3">
    <citation type="journal article" date="2004" name="Nature">
        <title>Genome sequence of the Brown Norway rat yields insights into mammalian evolution.</title>
        <authorList>
            <person name="Gibbs R.A."/>
            <person name="Weinstock G.M."/>
            <person name="Metzker M.L."/>
            <person name="Muzny D.M."/>
            <person name="Sodergren E.J."/>
            <person name="Scherer S."/>
            <person name="Scott G."/>
            <person name="Steffen D."/>
            <person name="Worley K.C."/>
            <person name="Burch P.E."/>
            <person name="Okwuonu G."/>
            <person name="Hines S."/>
            <person name="Lewis L."/>
            <person name="Deramo C."/>
            <person name="Delgado O."/>
            <person name="Dugan-Rocha S."/>
            <person name="Miner G."/>
            <person name="Morgan M."/>
            <person name="Hawes A."/>
            <person name="Gill R."/>
            <person name="Holt R.A."/>
            <person name="Adams M.D."/>
            <person name="Amanatides P.G."/>
            <person name="Baden-Tillson H."/>
            <person name="Barnstead M."/>
            <person name="Chin S."/>
            <person name="Evans C.A."/>
            <person name="Ferriera S."/>
            <person name="Fosler C."/>
            <person name="Glodek A."/>
            <person name="Gu Z."/>
            <person name="Jennings D."/>
            <person name="Kraft C.L."/>
            <person name="Nguyen T."/>
            <person name="Pfannkoch C.M."/>
            <person name="Sitter C."/>
            <person name="Sutton G.G."/>
            <person name="Venter J.C."/>
            <person name="Woodage T."/>
            <person name="Smith D."/>
            <person name="Lee H.-M."/>
            <person name="Gustafson E."/>
            <person name="Cahill P."/>
            <person name="Kana A."/>
            <person name="Doucette-Stamm L."/>
            <person name="Weinstock K."/>
            <person name="Fechtel K."/>
            <person name="Weiss R.B."/>
            <person name="Dunn D.M."/>
            <person name="Green E.D."/>
            <person name="Blakesley R.W."/>
            <person name="Bouffard G.G."/>
            <person name="De Jong P.J."/>
            <person name="Osoegawa K."/>
            <person name="Zhu B."/>
            <person name="Marra M."/>
            <person name="Schein J."/>
            <person name="Bosdet I."/>
            <person name="Fjell C."/>
            <person name="Jones S."/>
            <person name="Krzywinski M."/>
            <person name="Mathewson C."/>
            <person name="Siddiqui A."/>
            <person name="Wye N."/>
            <person name="McPherson J."/>
            <person name="Zhao S."/>
            <person name="Fraser C.M."/>
            <person name="Shetty J."/>
            <person name="Shatsman S."/>
            <person name="Geer K."/>
            <person name="Chen Y."/>
            <person name="Abramzon S."/>
            <person name="Nierman W.C."/>
            <person name="Havlak P.H."/>
            <person name="Chen R."/>
            <person name="Durbin K.J."/>
            <person name="Egan A."/>
            <person name="Ren Y."/>
            <person name="Song X.-Z."/>
            <person name="Li B."/>
            <person name="Liu Y."/>
            <person name="Qin X."/>
            <person name="Cawley S."/>
            <person name="Cooney A.J."/>
            <person name="D'Souza L.M."/>
            <person name="Martin K."/>
            <person name="Wu J.Q."/>
            <person name="Gonzalez-Garay M.L."/>
            <person name="Jackson A.R."/>
            <person name="Kalafus K.J."/>
            <person name="McLeod M.P."/>
            <person name="Milosavljevic A."/>
            <person name="Virk D."/>
            <person name="Volkov A."/>
            <person name="Wheeler D.A."/>
            <person name="Zhang Z."/>
            <person name="Bailey J.A."/>
            <person name="Eichler E.E."/>
            <person name="Tuzun E."/>
            <person name="Birney E."/>
            <person name="Mongin E."/>
            <person name="Ureta-Vidal A."/>
            <person name="Woodwark C."/>
            <person name="Zdobnov E."/>
            <person name="Bork P."/>
            <person name="Suyama M."/>
            <person name="Torrents D."/>
            <person name="Alexandersson M."/>
            <person name="Trask B.J."/>
            <person name="Young J.M."/>
            <person name="Huang H."/>
            <person name="Wang H."/>
            <person name="Xing H."/>
            <person name="Daniels S."/>
            <person name="Gietzen D."/>
            <person name="Schmidt J."/>
            <person name="Stevens K."/>
            <person name="Vitt U."/>
            <person name="Wingrove J."/>
            <person name="Camara F."/>
            <person name="Mar Alba M."/>
            <person name="Abril J.F."/>
            <person name="Guigo R."/>
            <person name="Smit A."/>
            <person name="Dubchak I."/>
            <person name="Rubin E.M."/>
            <person name="Couronne O."/>
            <person name="Poliakov A."/>
            <person name="Huebner N."/>
            <person name="Ganten D."/>
            <person name="Goesele C."/>
            <person name="Hummel O."/>
            <person name="Kreitler T."/>
            <person name="Lee Y.-A."/>
            <person name="Monti J."/>
            <person name="Schulz H."/>
            <person name="Zimdahl H."/>
            <person name="Himmelbauer H."/>
            <person name="Lehrach H."/>
            <person name="Jacob H.J."/>
            <person name="Bromberg S."/>
            <person name="Gullings-Handley J."/>
            <person name="Jensen-Seaman M.I."/>
            <person name="Kwitek A.E."/>
            <person name="Lazar J."/>
            <person name="Pasko D."/>
            <person name="Tonellato P.J."/>
            <person name="Twigger S."/>
            <person name="Ponting C.P."/>
            <person name="Duarte J.M."/>
            <person name="Rice S."/>
            <person name="Goodstadt L."/>
            <person name="Beatson S.A."/>
            <person name="Emes R.D."/>
            <person name="Winter E.E."/>
            <person name="Webber C."/>
            <person name="Brandt P."/>
            <person name="Nyakatura G."/>
            <person name="Adetobi M."/>
            <person name="Chiaromonte F."/>
            <person name="Elnitski L."/>
            <person name="Eswara P."/>
            <person name="Hardison R.C."/>
            <person name="Hou M."/>
            <person name="Kolbe D."/>
            <person name="Makova K."/>
            <person name="Miller W."/>
            <person name="Nekrutenko A."/>
            <person name="Riemer C."/>
            <person name="Schwartz S."/>
            <person name="Taylor J."/>
            <person name="Yang S."/>
            <person name="Zhang Y."/>
            <person name="Lindpaintner K."/>
            <person name="Andrews T.D."/>
            <person name="Caccamo M."/>
            <person name="Clamp M."/>
            <person name="Clarke L."/>
            <person name="Curwen V."/>
            <person name="Durbin R.M."/>
            <person name="Eyras E."/>
            <person name="Searle S.M."/>
            <person name="Cooper G.M."/>
            <person name="Batzoglou S."/>
            <person name="Brudno M."/>
            <person name="Sidow A."/>
            <person name="Stone E.A."/>
            <person name="Payseur B.A."/>
            <person name="Bourque G."/>
            <person name="Lopez-Otin C."/>
            <person name="Puente X.S."/>
            <person name="Chakrabarti K."/>
            <person name="Chatterji S."/>
            <person name="Dewey C."/>
            <person name="Pachter L."/>
            <person name="Bray N."/>
            <person name="Yap V.B."/>
            <person name="Caspi A."/>
            <person name="Tesler G."/>
            <person name="Pevzner P.A."/>
            <person name="Haussler D."/>
            <person name="Roskin K.M."/>
            <person name="Baertsch R."/>
            <person name="Clawson H."/>
            <person name="Furey T.S."/>
            <person name="Hinrichs A.S."/>
            <person name="Karolchik D."/>
            <person name="Kent W.J."/>
            <person name="Rosenbloom K.R."/>
            <person name="Trumbower H."/>
            <person name="Weirauch M."/>
            <person name="Cooper D.N."/>
            <person name="Stenson P.D."/>
            <person name="Ma B."/>
            <person name="Brent M."/>
            <person name="Arumugam M."/>
            <person name="Shteynberg D."/>
            <person name="Copley R.R."/>
            <person name="Taylor M.S."/>
            <person name="Riethman H."/>
            <person name="Mudunuri U."/>
            <person name="Peterson J."/>
            <person name="Guyer M."/>
            <person name="Felsenfeld A."/>
            <person name="Old S."/>
            <person name="Mockrin S."/>
            <person name="Collins F.S."/>
        </authorList>
    </citation>
    <scope>NUCLEOTIDE SEQUENCE [LARGE SCALE GENOMIC DNA]</scope>
    <source>
        <strain evidence="8">Brown Norway</strain>
    </source>
</reference>
<reference key="4">
    <citation type="journal article" date="2018" name="Nat. Commun.">
        <title>Deubiquitinase Usp12 functions noncatalytically to induce autophagy and confer neuroprotection in models of Huntington's disease.</title>
        <authorList>
            <person name="Aron R."/>
            <person name="Pellegrini P."/>
            <person name="Green E.W."/>
            <person name="Maddison D.C."/>
            <person name="Opoku-Nsiah K."/>
            <person name="Oliveira A.O."/>
            <person name="Wong J.S."/>
            <person name="Daub A.C."/>
            <person name="Giorgini F."/>
            <person name="Muchowski P."/>
            <person name="Finkbeiner S."/>
        </authorList>
    </citation>
    <scope>FUNCTION</scope>
    <scope>MUTAGENESIS OF CYS-48 AND CYS-50</scope>
</reference>
<name>UBP12_RAT</name>
<protein>
    <recommendedName>
        <fullName evidence="6">Ubiquitin carboxyl-terminal hydrolase 12</fullName>
        <ecNumber evidence="1">3.4.19.12</ecNumber>
    </recommendedName>
    <alternativeName>
        <fullName evidence="6">Deubiquitinating enzyme 12</fullName>
    </alternativeName>
    <alternativeName>
        <fullName evidence="9">Ubiquitin specific peptidase 12</fullName>
    </alternativeName>
    <alternativeName>
        <fullName evidence="6">Ubiquitin thioesterase 12</fullName>
    </alternativeName>
    <alternativeName>
        <fullName evidence="6">Ubiquitin-specific-processing protease 12</fullName>
    </alternativeName>
</protein>
<evidence type="ECO:0000250" key="1">
    <source>
        <dbReference type="UniProtKB" id="O75317"/>
    </source>
</evidence>
<evidence type="ECO:0000250" key="2">
    <source>
        <dbReference type="UniProtKB" id="Q9D9M2"/>
    </source>
</evidence>
<evidence type="ECO:0000255" key="3">
    <source>
        <dbReference type="PROSITE-ProRule" id="PRU01035"/>
    </source>
</evidence>
<evidence type="ECO:0000256" key="4">
    <source>
        <dbReference type="SAM" id="MobiDB-lite"/>
    </source>
</evidence>
<evidence type="ECO:0000269" key="5">
    <source>
    </source>
</evidence>
<evidence type="ECO:0000305" key="6"/>
<evidence type="ECO:0000312" key="7">
    <source>
        <dbReference type="EMBL" id="CBH26010.1"/>
    </source>
</evidence>
<evidence type="ECO:0000312" key="8">
    <source>
        <dbReference type="Proteomes" id="UP000002494"/>
    </source>
</evidence>
<evidence type="ECO:0000312" key="9">
    <source>
        <dbReference type="RGD" id="1308045"/>
    </source>
</evidence>
<organism evidence="8">
    <name type="scientific">Rattus norvegicus</name>
    <name type="common">Rat</name>
    <dbReference type="NCBI Taxonomy" id="10116"/>
    <lineage>
        <taxon>Eukaryota</taxon>
        <taxon>Metazoa</taxon>
        <taxon>Chordata</taxon>
        <taxon>Craniata</taxon>
        <taxon>Vertebrata</taxon>
        <taxon>Euteleostomi</taxon>
        <taxon>Mammalia</taxon>
        <taxon>Eutheria</taxon>
        <taxon>Euarchontoglires</taxon>
        <taxon>Glires</taxon>
        <taxon>Rodentia</taxon>
        <taxon>Myomorpha</taxon>
        <taxon>Muroidea</taxon>
        <taxon>Muridae</taxon>
        <taxon>Murinae</taxon>
        <taxon>Rattus</taxon>
    </lineage>
</organism>
<comment type="function">
    <text evidence="1 2 5">Deubiquitinating enzyme that plays various roles in the regulation of the immune response and inflammation. During TCR engagement and activation, translocates into the cytoplasm and deubiquitinates its substrates LAT and TRAT1 and prevents their lysosome-dependent degradation to stabilize the TCR signaling complex at the plasma membrane. Plays an essential role in the selective LPS-induced macrophage response through the activation of NF-kappa-B pathway. In addition, promotes that antiviral immune response through targeting DNA sensor IFI16 to inhibit its proteasome-dependent degradation. Participates in the interferon signaling pathway and antiviral response independently of its deubiquitinase activity by maintaining nuclear phosphorylated STAT1 levels via inhibition of its CREBBP-mediated acetylation and subsequent dephosphorylation (By similarity). Plays an intrinsic role in promoting the differentiation, activation and proliferation of CD4(+) T-cell by activating the NF-kappa-B signaling pathway through deubiquitinating and stabilizing B-cell lymphoma/leukemia 10/BCL10 (By similarity). In myeloid-derived suppressor cells promotes the activation of the NF-kappa-B via deubiquitination and stabilization of RELA (By similarity). Regulates the 'Lys-63'-linked polyubiquitin chains of BAX and thereby modulates the mitochondrial apoptotic process (By similarity). Negative regulator of NOTCH signaling that specifically deubiquitinates non-activated NOTCH receptors to target them for lysosomal degradation; deubiquitination of NOTCH stimulates its transport form late endosomes to lysosomes (By similarity). Protects neurons against HTT/huntingtin-induced polyglutamine expansion-dependent neurodegeneration through regulation of autophagic flux (PubMed:30266909). This function is independent of deubiquitinase activity or of other components of the USP12-WDR20-WDR48 deubiquitinating complex (PubMed:30266909). In complex with WDR48, acts as a potential tumor suppressor by positively regulating PHLPP1 stability (By similarity).</text>
</comment>
<comment type="catalytic activity">
    <reaction evidence="1">
        <text>Thiol-dependent hydrolysis of ester, thioester, amide, peptide and isopeptide bonds formed by the C-terminal Gly of ubiquitin (a 76-residue protein attached to proteins as an intracellular targeting signal).</text>
        <dbReference type="EC" id="3.4.19.12"/>
    </reaction>
</comment>
<comment type="activity regulation">
    <text evidence="1">Activated by interaction with WDR20, WDR48 and DMWD through different allosteric mechanisms.</text>
</comment>
<comment type="subunit">
    <text evidence="1">Interacts with WDR48. Interacts with WDR20; this interaction promotes translocation of the USP12 complex to the plasma membrane. Component of the USP12-WDR20-WDR48 deubiquitinating complex. Component of the USP12-DMWD-WDR48 deubiquitinating complex. Interacts with PHLPP1. Interacts with RBPJ. Interacts with CBP; this interaction blocks the acetyltransferase activity of CREBBP. Interacts with ITCH; the interaction is more efficient when both USP12 and WDR48/UAF1 are involved and may mediate recruitment of the USP12 deubiquitinating complex to Notch.</text>
</comment>
<comment type="subcellular location">
    <subcellularLocation>
        <location evidence="1">Nucleus</location>
    </subcellularLocation>
    <subcellularLocation>
        <location evidence="1">Cytoplasm</location>
    </subcellularLocation>
    <subcellularLocation>
        <location evidence="1">Cell membrane</location>
    </subcellularLocation>
    <text evidence="1">Translocates from the nucleus to the cytosol on TCR stimulation, while it translocates into the nucleus in IFN signaling. USP12/WDR20/WDR48 complex is localized mainly to the plasma membrane.</text>
</comment>
<comment type="similarity">
    <text evidence="6">Belongs to the peptidase C19 family. USP12/USP46 subfamily.</text>
</comment>
<accession>D0RB01</accession>
<accession>F1LWD4</accession>